<name>EFTU_STRMU</name>
<reference key="1">
    <citation type="journal article" date="2002" name="Proc. Natl. Acad. Sci. U.S.A.">
        <title>Genome sequence of Streptococcus mutans UA159, a cariogenic dental pathogen.</title>
        <authorList>
            <person name="Ajdic D.J."/>
            <person name="McShan W.M."/>
            <person name="McLaughlin R.E."/>
            <person name="Savic G."/>
            <person name="Chang J."/>
            <person name="Carson M.B."/>
            <person name="Primeaux C."/>
            <person name="Tian R."/>
            <person name="Kenton S."/>
            <person name="Jia H.G."/>
            <person name="Lin S.P."/>
            <person name="Qian Y."/>
            <person name="Li S."/>
            <person name="Zhu H."/>
            <person name="Najar F.Z."/>
            <person name="Lai H."/>
            <person name="White J."/>
            <person name="Roe B.A."/>
            <person name="Ferretti J.J."/>
        </authorList>
    </citation>
    <scope>NUCLEOTIDE SEQUENCE [LARGE SCALE GENOMIC DNA]</scope>
    <source>
        <strain>ATCC 700610 / UA159</strain>
    </source>
</reference>
<reference key="2">
    <citation type="submission" date="1996-10" db="EMBL/GenBank/DDBJ databases">
        <authorList>
            <person name="Peruzzi F."/>
            <person name="Piggot P.J."/>
            <person name="Daneo-Moore L."/>
        </authorList>
    </citation>
    <scope>NUCLEOTIDE SEQUENCE [GENOMIC DNA] OF 238-398</scope>
    <source>
        <strain>GS-5</strain>
    </source>
</reference>
<keyword id="KW-0963">Cytoplasm</keyword>
<keyword id="KW-0251">Elongation factor</keyword>
<keyword id="KW-0342">GTP-binding</keyword>
<keyword id="KW-0378">Hydrolase</keyword>
<keyword id="KW-0460">Magnesium</keyword>
<keyword id="KW-0479">Metal-binding</keyword>
<keyword id="KW-0547">Nucleotide-binding</keyword>
<keyword id="KW-0648">Protein biosynthesis</keyword>
<keyword id="KW-1185">Reference proteome</keyword>
<organism>
    <name type="scientific">Streptococcus mutans serotype c (strain ATCC 700610 / UA159)</name>
    <dbReference type="NCBI Taxonomy" id="210007"/>
    <lineage>
        <taxon>Bacteria</taxon>
        <taxon>Bacillati</taxon>
        <taxon>Bacillota</taxon>
        <taxon>Bacilli</taxon>
        <taxon>Lactobacillales</taxon>
        <taxon>Streptococcaceae</taxon>
        <taxon>Streptococcus</taxon>
    </lineage>
</organism>
<evidence type="ECO:0000250" key="1"/>
<evidence type="ECO:0000255" key="2">
    <source>
        <dbReference type="HAMAP-Rule" id="MF_00118"/>
    </source>
</evidence>
<gene>
    <name evidence="2" type="primary">tuf</name>
    <name type="ordered locus">SMU_714</name>
</gene>
<sequence length="398" mass="43919">MAKEKYDRSKPHVNIGTIGHVDHGKTTLTAAITTVLARRLPSAVNQPKDYSSIDAAPEERERGITINTAHVEYETEKRHYAHIDAPGHADYVKNMITGAAQMDGAILVVASTDGPMPQTREHILLSRQVGVKYLIVFMNKVDLVDDEELLELVEMEIRDLLSEYDFPGDDIPVIQGSALKALEGDTAQEDIIMELMHTVDDYIPDPERDTDKPLLLPVEDVFSITGRGTVASGRIDRGTVKVNDEVEIVGIRDDIQKAVVTGVEMFRKQLDEGIAGDNVGVLLRGIQRDEIERGQVLAKPGSIHPHTKFKGEVYILTKEEGGRHTPFFNNYRPQFYFRTTDVTGSIELPAGTEMVMPGDNVTIDVELIHPIAVEQGTTFSIREGGRTVGSGIVSEIEA</sequence>
<proteinExistence type="inferred from homology"/>
<accession>P72483</accession>
<comment type="function">
    <text evidence="2">GTP hydrolase that promotes the GTP-dependent binding of aminoacyl-tRNA to the A-site of ribosomes during protein biosynthesis.</text>
</comment>
<comment type="catalytic activity">
    <reaction evidence="2">
        <text>GTP + H2O = GDP + phosphate + H(+)</text>
        <dbReference type="Rhea" id="RHEA:19669"/>
        <dbReference type="ChEBI" id="CHEBI:15377"/>
        <dbReference type="ChEBI" id="CHEBI:15378"/>
        <dbReference type="ChEBI" id="CHEBI:37565"/>
        <dbReference type="ChEBI" id="CHEBI:43474"/>
        <dbReference type="ChEBI" id="CHEBI:58189"/>
        <dbReference type="EC" id="3.6.5.3"/>
    </reaction>
    <physiologicalReaction direction="left-to-right" evidence="2">
        <dbReference type="Rhea" id="RHEA:19670"/>
    </physiologicalReaction>
</comment>
<comment type="subunit">
    <text>Monomer.</text>
</comment>
<comment type="subcellular location">
    <subcellularLocation>
        <location evidence="2">Cytoplasm</location>
    </subcellularLocation>
</comment>
<comment type="similarity">
    <text evidence="2">Belongs to the TRAFAC class translation factor GTPase superfamily. Classic translation factor GTPase family. EF-Tu/EF-1A subfamily.</text>
</comment>
<dbReference type="EC" id="3.6.5.3" evidence="2"/>
<dbReference type="EMBL" id="AE014133">
    <property type="protein sequence ID" value="AAN58443.1"/>
    <property type="molecule type" value="Genomic_DNA"/>
</dbReference>
<dbReference type="EMBL" id="U75481">
    <property type="protein sequence ID" value="AAB41198.1"/>
    <property type="molecule type" value="Genomic_DNA"/>
</dbReference>
<dbReference type="RefSeq" id="NP_721137.1">
    <property type="nucleotide sequence ID" value="NC_004350.2"/>
</dbReference>
<dbReference type="RefSeq" id="WP_002263314.1">
    <property type="nucleotide sequence ID" value="NC_004350.2"/>
</dbReference>
<dbReference type="SMR" id="P72483"/>
<dbReference type="STRING" id="210007.SMU_714"/>
<dbReference type="GeneID" id="93859736"/>
<dbReference type="KEGG" id="smu:SMU_714"/>
<dbReference type="PATRIC" id="fig|210007.7.peg.633"/>
<dbReference type="eggNOG" id="COG0050">
    <property type="taxonomic scope" value="Bacteria"/>
</dbReference>
<dbReference type="HOGENOM" id="CLU_007265_0_1_9"/>
<dbReference type="OrthoDB" id="9804504at2"/>
<dbReference type="PhylomeDB" id="P72483"/>
<dbReference type="Proteomes" id="UP000002512">
    <property type="component" value="Chromosome"/>
</dbReference>
<dbReference type="GO" id="GO:0005829">
    <property type="term" value="C:cytosol"/>
    <property type="evidence" value="ECO:0007669"/>
    <property type="project" value="TreeGrafter"/>
</dbReference>
<dbReference type="GO" id="GO:0005525">
    <property type="term" value="F:GTP binding"/>
    <property type="evidence" value="ECO:0007669"/>
    <property type="project" value="UniProtKB-UniRule"/>
</dbReference>
<dbReference type="GO" id="GO:0003924">
    <property type="term" value="F:GTPase activity"/>
    <property type="evidence" value="ECO:0007669"/>
    <property type="project" value="InterPro"/>
</dbReference>
<dbReference type="GO" id="GO:0003746">
    <property type="term" value="F:translation elongation factor activity"/>
    <property type="evidence" value="ECO:0007669"/>
    <property type="project" value="UniProtKB-UniRule"/>
</dbReference>
<dbReference type="CDD" id="cd01884">
    <property type="entry name" value="EF_Tu"/>
    <property type="match status" value="1"/>
</dbReference>
<dbReference type="CDD" id="cd03697">
    <property type="entry name" value="EFTU_II"/>
    <property type="match status" value="1"/>
</dbReference>
<dbReference type="CDD" id="cd03707">
    <property type="entry name" value="EFTU_III"/>
    <property type="match status" value="1"/>
</dbReference>
<dbReference type="FunFam" id="2.40.30.10:FF:000001">
    <property type="entry name" value="Elongation factor Tu"/>
    <property type="match status" value="1"/>
</dbReference>
<dbReference type="FunFam" id="3.40.50.300:FF:000003">
    <property type="entry name" value="Elongation factor Tu"/>
    <property type="match status" value="1"/>
</dbReference>
<dbReference type="Gene3D" id="3.40.50.300">
    <property type="entry name" value="P-loop containing nucleotide triphosphate hydrolases"/>
    <property type="match status" value="1"/>
</dbReference>
<dbReference type="Gene3D" id="2.40.30.10">
    <property type="entry name" value="Translation factors"/>
    <property type="match status" value="2"/>
</dbReference>
<dbReference type="HAMAP" id="MF_00118_B">
    <property type="entry name" value="EF_Tu_B"/>
    <property type="match status" value="1"/>
</dbReference>
<dbReference type="InterPro" id="IPR041709">
    <property type="entry name" value="EF-Tu_GTP-bd"/>
</dbReference>
<dbReference type="InterPro" id="IPR050055">
    <property type="entry name" value="EF-Tu_GTPase"/>
</dbReference>
<dbReference type="InterPro" id="IPR004161">
    <property type="entry name" value="EFTu-like_2"/>
</dbReference>
<dbReference type="InterPro" id="IPR033720">
    <property type="entry name" value="EFTU_2"/>
</dbReference>
<dbReference type="InterPro" id="IPR031157">
    <property type="entry name" value="G_TR_CS"/>
</dbReference>
<dbReference type="InterPro" id="IPR027417">
    <property type="entry name" value="P-loop_NTPase"/>
</dbReference>
<dbReference type="InterPro" id="IPR005225">
    <property type="entry name" value="Small_GTP-bd"/>
</dbReference>
<dbReference type="InterPro" id="IPR000795">
    <property type="entry name" value="T_Tr_GTP-bd_dom"/>
</dbReference>
<dbReference type="InterPro" id="IPR009000">
    <property type="entry name" value="Transl_B-barrel_sf"/>
</dbReference>
<dbReference type="InterPro" id="IPR009001">
    <property type="entry name" value="Transl_elong_EF1A/Init_IF2_C"/>
</dbReference>
<dbReference type="InterPro" id="IPR004541">
    <property type="entry name" value="Transl_elong_EFTu/EF1A_bac/org"/>
</dbReference>
<dbReference type="InterPro" id="IPR004160">
    <property type="entry name" value="Transl_elong_EFTu/EF1A_C"/>
</dbReference>
<dbReference type="NCBIfam" id="TIGR00485">
    <property type="entry name" value="EF-Tu"/>
    <property type="match status" value="1"/>
</dbReference>
<dbReference type="NCBIfam" id="NF000766">
    <property type="entry name" value="PRK00049.1"/>
    <property type="match status" value="1"/>
</dbReference>
<dbReference type="NCBIfam" id="NF009372">
    <property type="entry name" value="PRK12735.1"/>
    <property type="match status" value="1"/>
</dbReference>
<dbReference type="NCBIfam" id="NF009373">
    <property type="entry name" value="PRK12736.1"/>
    <property type="match status" value="1"/>
</dbReference>
<dbReference type="NCBIfam" id="TIGR00231">
    <property type="entry name" value="small_GTP"/>
    <property type="match status" value="1"/>
</dbReference>
<dbReference type="PANTHER" id="PTHR43721:SF22">
    <property type="entry name" value="ELONGATION FACTOR TU, MITOCHONDRIAL"/>
    <property type="match status" value="1"/>
</dbReference>
<dbReference type="PANTHER" id="PTHR43721">
    <property type="entry name" value="ELONGATION FACTOR TU-RELATED"/>
    <property type="match status" value="1"/>
</dbReference>
<dbReference type="Pfam" id="PF00009">
    <property type="entry name" value="GTP_EFTU"/>
    <property type="match status" value="1"/>
</dbReference>
<dbReference type="Pfam" id="PF03144">
    <property type="entry name" value="GTP_EFTU_D2"/>
    <property type="match status" value="1"/>
</dbReference>
<dbReference type="Pfam" id="PF03143">
    <property type="entry name" value="GTP_EFTU_D3"/>
    <property type="match status" value="1"/>
</dbReference>
<dbReference type="PRINTS" id="PR00315">
    <property type="entry name" value="ELONGATNFCT"/>
</dbReference>
<dbReference type="SUPFAM" id="SSF50465">
    <property type="entry name" value="EF-Tu/eEF-1alpha/eIF2-gamma C-terminal domain"/>
    <property type="match status" value="1"/>
</dbReference>
<dbReference type="SUPFAM" id="SSF52540">
    <property type="entry name" value="P-loop containing nucleoside triphosphate hydrolases"/>
    <property type="match status" value="1"/>
</dbReference>
<dbReference type="SUPFAM" id="SSF50447">
    <property type="entry name" value="Translation proteins"/>
    <property type="match status" value="1"/>
</dbReference>
<dbReference type="PROSITE" id="PS00301">
    <property type="entry name" value="G_TR_1"/>
    <property type="match status" value="1"/>
</dbReference>
<dbReference type="PROSITE" id="PS51722">
    <property type="entry name" value="G_TR_2"/>
    <property type="match status" value="1"/>
</dbReference>
<feature type="chain" id="PRO_0000091405" description="Elongation factor Tu">
    <location>
        <begin position="1"/>
        <end position="398"/>
    </location>
</feature>
<feature type="domain" description="tr-type G">
    <location>
        <begin position="10"/>
        <end position="207"/>
    </location>
</feature>
<feature type="region of interest" description="G1" evidence="1">
    <location>
        <begin position="19"/>
        <end position="26"/>
    </location>
</feature>
<feature type="region of interest" description="G2" evidence="1">
    <location>
        <begin position="63"/>
        <end position="67"/>
    </location>
</feature>
<feature type="region of interest" description="G3" evidence="1">
    <location>
        <begin position="84"/>
        <end position="87"/>
    </location>
</feature>
<feature type="region of interest" description="G4" evidence="1">
    <location>
        <begin position="139"/>
        <end position="142"/>
    </location>
</feature>
<feature type="region of interest" description="G5" evidence="1">
    <location>
        <begin position="177"/>
        <end position="179"/>
    </location>
</feature>
<feature type="binding site" evidence="2">
    <location>
        <begin position="19"/>
        <end position="26"/>
    </location>
    <ligand>
        <name>GTP</name>
        <dbReference type="ChEBI" id="CHEBI:37565"/>
    </ligand>
</feature>
<feature type="binding site" evidence="2">
    <location>
        <position position="26"/>
    </location>
    <ligand>
        <name>Mg(2+)</name>
        <dbReference type="ChEBI" id="CHEBI:18420"/>
    </ligand>
</feature>
<feature type="binding site" evidence="2">
    <location>
        <begin position="84"/>
        <end position="88"/>
    </location>
    <ligand>
        <name>GTP</name>
        <dbReference type="ChEBI" id="CHEBI:37565"/>
    </ligand>
</feature>
<feature type="binding site" evidence="2">
    <location>
        <begin position="139"/>
        <end position="142"/>
    </location>
    <ligand>
        <name>GTP</name>
        <dbReference type="ChEBI" id="CHEBI:37565"/>
    </ligand>
</feature>
<protein>
    <recommendedName>
        <fullName evidence="2">Elongation factor Tu</fullName>
        <shortName evidence="2">EF-Tu</shortName>
        <ecNumber evidence="2">3.6.5.3</ecNumber>
    </recommendedName>
</protein>